<proteinExistence type="evidence at transcript level"/>
<evidence type="ECO:0000256" key="1">
    <source>
        <dbReference type="SAM" id="MobiDB-lite"/>
    </source>
</evidence>
<evidence type="ECO:0000305" key="2"/>
<reference key="1">
    <citation type="journal article" date="1985" name="EMBO J.">
        <title>An extracellular matrix protein in plants: characterization of a genomic clone for carrot extensin.</title>
        <authorList>
            <person name="Chen J."/>
            <person name="Varner J.E."/>
        </authorList>
    </citation>
    <scope>NUCLEOTIDE SEQUENCE [GENOMIC DNA]</scope>
</reference>
<reference key="2">
    <citation type="journal article" date="1985" name="Proc. Natl. Acad. Sci. U.S.A.">
        <title>Isolation and characterization of cDNA clones for carrot extensin and a proline-rich 33-kDa protein.</title>
        <authorList>
            <person name="Chen J."/>
            <person name="Varner J.E."/>
        </authorList>
    </citation>
    <scope>NUCLEOTIDE SEQUENCE [MRNA] OF 264-306</scope>
</reference>
<name>EXTN_DAUCA</name>
<organism>
    <name type="scientific">Daucus carota</name>
    <name type="common">Wild carrot</name>
    <dbReference type="NCBI Taxonomy" id="4039"/>
    <lineage>
        <taxon>Eukaryota</taxon>
        <taxon>Viridiplantae</taxon>
        <taxon>Streptophyta</taxon>
        <taxon>Embryophyta</taxon>
        <taxon>Tracheophyta</taxon>
        <taxon>Spermatophyta</taxon>
        <taxon>Magnoliopsida</taxon>
        <taxon>eudicotyledons</taxon>
        <taxon>Gunneridae</taxon>
        <taxon>Pentapetalae</taxon>
        <taxon>asterids</taxon>
        <taxon>campanulids</taxon>
        <taxon>Apiales</taxon>
        <taxon>Apiaceae</taxon>
        <taxon>Apioideae</taxon>
        <taxon>Scandiceae</taxon>
        <taxon>Daucinae</taxon>
        <taxon>Daucus</taxon>
        <taxon>Daucus sect. Daucus</taxon>
    </lineage>
</organism>
<feature type="signal peptide">
    <location>
        <begin position="1"/>
        <end position="32"/>
    </location>
</feature>
<feature type="chain" id="PRO_0000008728" description="Extensin">
    <location>
        <begin position="33"/>
        <end position="306"/>
    </location>
</feature>
<feature type="region of interest" description="Disordered" evidence="1">
    <location>
        <begin position="33"/>
        <end position="306"/>
    </location>
</feature>
<feature type="compositionally biased region" description="Pro residues" evidence="1">
    <location>
        <begin position="38"/>
        <end position="122"/>
    </location>
</feature>
<feature type="compositionally biased region" description="Pro residues" evidence="1">
    <location>
        <begin position="133"/>
        <end position="152"/>
    </location>
</feature>
<feature type="compositionally biased region" description="Pro residues" evidence="1">
    <location>
        <begin position="183"/>
        <end position="214"/>
    </location>
</feature>
<feature type="compositionally biased region" description="Pro residues" evidence="1">
    <location>
        <begin position="225"/>
        <end position="290"/>
    </location>
</feature>
<sequence>MGRIARGSKMSSLIVSLLVVLVSLNLASETTAKYTYSSPPPPEHSPPPPEHSPPPPYHYESPPPPKHSPPPPTPVYKYKSPPPPMHSPPPPYHFESPPPPKHSPPPPTPVYKYKSPPPPKHSPAPVHHYKYKSPPPPTPVYKYKSPPPPKHSPAPEHHYKYKSPPPPKHFPAPEHHYKYKYKSPPPPTPVYKYKSPPPPTPVYKYKSPPPPKHSPAPVHHYKYKSPPPPTPVYKSPPPPEHSPPPPTPVYKYKSPPPPMHSPPPPTPVYKYKSPPPPMHSPPPPVYSPPPPKHHYSYTSPPPPHHY</sequence>
<protein>
    <recommendedName>
        <fullName>Extensin</fullName>
    </recommendedName>
</protein>
<dbReference type="EMBL" id="X02873">
    <property type="protein sequence ID" value="CAA26632.1"/>
    <property type="molecule type" value="Genomic_DNA"/>
</dbReference>
<dbReference type="EMBL" id="M11221">
    <property type="protein sequence ID" value="AAA33137.1"/>
    <property type="molecule type" value="mRNA"/>
</dbReference>
<dbReference type="PIR" id="A24354">
    <property type="entry name" value="A24354"/>
</dbReference>
<dbReference type="GO" id="GO:0005576">
    <property type="term" value="C:extracellular region"/>
    <property type="evidence" value="ECO:0007669"/>
    <property type="project" value="UniProtKB-KW"/>
</dbReference>
<dbReference type="GO" id="GO:0009530">
    <property type="term" value="C:primary cell wall"/>
    <property type="evidence" value="ECO:0007669"/>
    <property type="project" value="UniProtKB-SubCell"/>
</dbReference>
<dbReference type="GO" id="GO:0005199">
    <property type="term" value="F:structural constituent of cell wall"/>
    <property type="evidence" value="ECO:0007669"/>
    <property type="project" value="InterPro"/>
</dbReference>
<dbReference type="GO" id="GO:0009664">
    <property type="term" value="P:plant-type cell wall organization"/>
    <property type="evidence" value="ECO:0007669"/>
    <property type="project" value="InterPro"/>
</dbReference>
<dbReference type="InterPro" id="IPR006706">
    <property type="entry name" value="Extensin_dom"/>
</dbReference>
<dbReference type="PANTHER" id="PTHR36586:SF50">
    <property type="entry name" value="EXTENSIN DOMAIN-CONTAINING PROTEIN"/>
    <property type="match status" value="1"/>
</dbReference>
<dbReference type="PANTHER" id="PTHR36586">
    <property type="entry name" value="PROLINE-RICH EXTENSIN-LIKE"/>
    <property type="match status" value="1"/>
</dbReference>
<dbReference type="Pfam" id="PF04554">
    <property type="entry name" value="Extensin_2"/>
    <property type="match status" value="4"/>
</dbReference>
<dbReference type="PRINTS" id="PR01217">
    <property type="entry name" value="PRICHEXTENSN"/>
</dbReference>
<accession>P06599</accession>
<comment type="function">
    <text>Structural component in primary cell wall.</text>
</comment>
<comment type="subcellular location">
    <subcellularLocation>
        <location>Secreted</location>
        <location>Primary cell wall</location>
    </subcellularLocation>
</comment>
<comment type="PTM">
    <text>Hydroxylated on proline residues in the S-P-P-P-P repeat.</text>
</comment>
<comment type="PTM">
    <text>O-glycosylated on hydroxyprolines.</text>
</comment>
<comment type="caution">
    <text evidence="2">It is uncertain whether Met-1 or Met-10 is the initiator.</text>
</comment>
<keyword id="KW-0134">Cell wall</keyword>
<keyword id="KW-0961">Cell wall biogenesis/degradation</keyword>
<keyword id="KW-0325">Glycoprotein</keyword>
<keyword id="KW-0379">Hydroxylation</keyword>
<keyword id="KW-0677">Repeat</keyword>
<keyword id="KW-0964">Secreted</keyword>
<keyword id="KW-0732">Signal</keyword>